<dbReference type="EMBL" id="X96540">
    <property type="protein sequence ID" value="CAA65385.1"/>
    <property type="molecule type" value="mRNA"/>
</dbReference>
<dbReference type="EMBL" id="X87620">
    <property type="protein sequence ID" value="CAA60952.1"/>
    <property type="molecule type" value="mRNA"/>
</dbReference>
<dbReference type="RefSeq" id="NP_789861.1">
    <property type="nucleotide sequence ID" value="NM_176872.1"/>
</dbReference>
<dbReference type="SMR" id="Q95116"/>
<dbReference type="FunCoup" id="Q95116">
    <property type="interactions" value="420"/>
</dbReference>
<dbReference type="STRING" id="9913.ENSBTAP00000071758"/>
<dbReference type="GlyCosmos" id="Q95116">
    <property type="glycosylation" value="8 sites, No reported glycans"/>
</dbReference>
<dbReference type="GlyGen" id="Q95116">
    <property type="glycosylation" value="8 sites"/>
</dbReference>
<dbReference type="PaxDb" id="9913-ENSBTAP00000042078"/>
<dbReference type="KEGG" id="bta:338092"/>
<dbReference type="CTD" id="7058"/>
<dbReference type="eggNOG" id="ENOG502QRK8">
    <property type="taxonomic scope" value="Eukaryota"/>
</dbReference>
<dbReference type="InParanoid" id="Q95116"/>
<dbReference type="OrthoDB" id="14563at2759"/>
<dbReference type="Proteomes" id="UP000009136">
    <property type="component" value="Unplaced"/>
</dbReference>
<dbReference type="GO" id="GO:0062023">
    <property type="term" value="C:collagen-containing extracellular matrix"/>
    <property type="evidence" value="ECO:0000318"/>
    <property type="project" value="GO_Central"/>
</dbReference>
<dbReference type="GO" id="GO:0005576">
    <property type="term" value="C:extracellular region"/>
    <property type="evidence" value="ECO:0007669"/>
    <property type="project" value="InterPro"/>
</dbReference>
<dbReference type="GO" id="GO:0005509">
    <property type="term" value="F:calcium ion binding"/>
    <property type="evidence" value="ECO:0007669"/>
    <property type="project" value="InterPro"/>
</dbReference>
<dbReference type="GO" id="GO:0008201">
    <property type="term" value="F:heparin binding"/>
    <property type="evidence" value="ECO:0007669"/>
    <property type="project" value="UniProtKB-KW"/>
</dbReference>
<dbReference type="GO" id="GO:0007155">
    <property type="term" value="P:cell adhesion"/>
    <property type="evidence" value="ECO:0007669"/>
    <property type="project" value="UniProtKB-KW"/>
</dbReference>
<dbReference type="GO" id="GO:0016525">
    <property type="term" value="P:negative regulation of angiogenesis"/>
    <property type="evidence" value="ECO:0000318"/>
    <property type="project" value="GO_Central"/>
</dbReference>
<dbReference type="FunFam" id="2.20.100.10:FF:000004">
    <property type="entry name" value="Adhesion G protein-coupled receptor B2"/>
    <property type="match status" value="1"/>
</dbReference>
<dbReference type="FunFam" id="2.20.100.10:FF:000007">
    <property type="entry name" value="Thrombospondin 1"/>
    <property type="match status" value="2"/>
</dbReference>
<dbReference type="FunFam" id="2.60.120.200:FF:000009">
    <property type="entry name" value="Thrombospondin 1"/>
    <property type="match status" value="1"/>
</dbReference>
<dbReference type="FunFam" id="2.10.25.10:FF:000070">
    <property type="entry name" value="Thrombospondin 2"/>
    <property type="match status" value="1"/>
</dbReference>
<dbReference type="FunFam" id="2.60.120.200:FF:000067">
    <property type="entry name" value="Thrombospondin 2"/>
    <property type="match status" value="1"/>
</dbReference>
<dbReference type="FunFam" id="4.10.1080.10:FF:000003">
    <property type="entry name" value="Thrombospondin 2"/>
    <property type="match status" value="1"/>
</dbReference>
<dbReference type="FunFam" id="2.10.25.10:FF:000025">
    <property type="entry name" value="Thrombospondin 3"/>
    <property type="match status" value="1"/>
</dbReference>
<dbReference type="FunFam" id="2.10.25.10:FF:000027">
    <property type="entry name" value="Thrombospondin 3"/>
    <property type="match status" value="1"/>
</dbReference>
<dbReference type="FunFam" id="4.10.1080.10:FF:000001">
    <property type="entry name" value="Thrombospondin 3"/>
    <property type="match status" value="1"/>
</dbReference>
<dbReference type="Gene3D" id="2.60.120.200">
    <property type="match status" value="2"/>
</dbReference>
<dbReference type="Gene3D" id="6.20.200.20">
    <property type="match status" value="1"/>
</dbReference>
<dbReference type="Gene3D" id="2.10.25.10">
    <property type="entry name" value="Laminin"/>
    <property type="match status" value="3"/>
</dbReference>
<dbReference type="Gene3D" id="2.20.100.10">
    <property type="entry name" value="Thrombospondin type-1 (TSP1) repeat"/>
    <property type="match status" value="3"/>
</dbReference>
<dbReference type="Gene3D" id="4.10.1080.10">
    <property type="entry name" value="TSP type-3 repeat"/>
    <property type="match status" value="2"/>
</dbReference>
<dbReference type="InterPro" id="IPR013320">
    <property type="entry name" value="ConA-like_dom_sf"/>
</dbReference>
<dbReference type="InterPro" id="IPR001881">
    <property type="entry name" value="EGF-like_Ca-bd_dom"/>
</dbReference>
<dbReference type="InterPro" id="IPR000742">
    <property type="entry name" value="EGF-like_dom"/>
</dbReference>
<dbReference type="InterPro" id="IPR024731">
    <property type="entry name" value="EGF_dom"/>
</dbReference>
<dbReference type="InterPro" id="IPR003367">
    <property type="entry name" value="Thrombospondin_3-like_rpt"/>
</dbReference>
<dbReference type="InterPro" id="IPR017897">
    <property type="entry name" value="Thrombospondin_3_rpt"/>
</dbReference>
<dbReference type="InterPro" id="IPR008859">
    <property type="entry name" value="Thrombospondin_C"/>
</dbReference>
<dbReference type="InterPro" id="IPR000884">
    <property type="entry name" value="TSP1_rpt"/>
</dbReference>
<dbReference type="InterPro" id="IPR036383">
    <property type="entry name" value="TSP1_rpt_sf"/>
</dbReference>
<dbReference type="InterPro" id="IPR028974">
    <property type="entry name" value="TSP_type-3_rpt"/>
</dbReference>
<dbReference type="InterPro" id="IPR048287">
    <property type="entry name" value="TSPN-like_N"/>
</dbReference>
<dbReference type="InterPro" id="IPR001007">
    <property type="entry name" value="VWF_dom"/>
</dbReference>
<dbReference type="PANTHER" id="PTHR10199">
    <property type="entry name" value="THROMBOSPONDIN"/>
    <property type="match status" value="1"/>
</dbReference>
<dbReference type="PANTHER" id="PTHR10199:SF10">
    <property type="entry name" value="THROMBOSPONDIN-2"/>
    <property type="match status" value="1"/>
</dbReference>
<dbReference type="Pfam" id="PF12947">
    <property type="entry name" value="EGF_3"/>
    <property type="match status" value="1"/>
</dbReference>
<dbReference type="Pfam" id="PF00090">
    <property type="entry name" value="TSP_1"/>
    <property type="match status" value="3"/>
</dbReference>
<dbReference type="Pfam" id="PF02412">
    <property type="entry name" value="TSP_3"/>
    <property type="match status" value="7"/>
</dbReference>
<dbReference type="Pfam" id="PF05735">
    <property type="entry name" value="TSP_C"/>
    <property type="match status" value="1"/>
</dbReference>
<dbReference type="Pfam" id="PF00093">
    <property type="entry name" value="VWC"/>
    <property type="match status" value="1"/>
</dbReference>
<dbReference type="PRINTS" id="PR01705">
    <property type="entry name" value="TSP1REPEAT"/>
</dbReference>
<dbReference type="SMART" id="SM00181">
    <property type="entry name" value="EGF"/>
    <property type="match status" value="3"/>
</dbReference>
<dbReference type="SMART" id="SM00179">
    <property type="entry name" value="EGF_CA"/>
    <property type="match status" value="2"/>
</dbReference>
<dbReference type="SMART" id="SM00209">
    <property type="entry name" value="TSP1"/>
    <property type="match status" value="3"/>
</dbReference>
<dbReference type="SMART" id="SM00210">
    <property type="entry name" value="TSPN"/>
    <property type="match status" value="1"/>
</dbReference>
<dbReference type="SMART" id="SM00214">
    <property type="entry name" value="VWC"/>
    <property type="match status" value="1"/>
</dbReference>
<dbReference type="SUPFAM" id="SSF49899">
    <property type="entry name" value="Concanavalin A-like lectins/glucanases"/>
    <property type="match status" value="2"/>
</dbReference>
<dbReference type="SUPFAM" id="SSF57196">
    <property type="entry name" value="EGF/Laminin"/>
    <property type="match status" value="1"/>
</dbReference>
<dbReference type="SUPFAM" id="SSF57603">
    <property type="entry name" value="FnI-like domain"/>
    <property type="match status" value="1"/>
</dbReference>
<dbReference type="SUPFAM" id="SSF103647">
    <property type="entry name" value="TSP type-3 repeat"/>
    <property type="match status" value="3"/>
</dbReference>
<dbReference type="SUPFAM" id="SSF82895">
    <property type="entry name" value="TSP-1 type 1 repeat"/>
    <property type="match status" value="3"/>
</dbReference>
<dbReference type="PROSITE" id="PS01186">
    <property type="entry name" value="EGF_2"/>
    <property type="match status" value="1"/>
</dbReference>
<dbReference type="PROSITE" id="PS50026">
    <property type="entry name" value="EGF_3"/>
    <property type="match status" value="2"/>
</dbReference>
<dbReference type="PROSITE" id="PS50092">
    <property type="entry name" value="TSP1"/>
    <property type="match status" value="3"/>
</dbReference>
<dbReference type="PROSITE" id="PS51234">
    <property type="entry name" value="TSP3"/>
    <property type="match status" value="8"/>
</dbReference>
<dbReference type="PROSITE" id="PS51236">
    <property type="entry name" value="TSP_CTER"/>
    <property type="match status" value="1"/>
</dbReference>
<dbReference type="PROSITE" id="PS01208">
    <property type="entry name" value="VWFC_1"/>
    <property type="match status" value="1"/>
</dbReference>
<dbReference type="PROSITE" id="PS50184">
    <property type="entry name" value="VWFC_2"/>
    <property type="match status" value="1"/>
</dbReference>
<keyword id="KW-0106">Calcium</keyword>
<keyword id="KW-0130">Cell adhesion</keyword>
<keyword id="KW-1015">Disulfide bond</keyword>
<keyword id="KW-0245">EGF-like domain</keyword>
<keyword id="KW-0325">Glycoprotein</keyword>
<keyword id="KW-0358">Heparin-binding</keyword>
<keyword id="KW-1185">Reference proteome</keyword>
<keyword id="KW-0677">Repeat</keyword>
<keyword id="KW-0732">Signal</keyword>
<reference key="1">
    <citation type="submission" date="1998-03" db="EMBL/GenBank/DDBJ databases">
        <authorList>
            <person name="Danik M."/>
            <person name="Chinn A."/>
            <person name="Lafeuillade M."/>
            <person name="Keramidas M."/>
            <person name="Aguesse-Germon S."/>
            <person name="Penhoat A."/>
            <person name="Chen H."/>
            <person name="Mosher D."/>
            <person name="Chambaz E.M."/>
            <person name="Feige J.J."/>
        </authorList>
    </citation>
    <scope>NUCLEOTIDE SEQUENCE [MRNA]</scope>
</reference>
<reference key="2">
    <citation type="journal article" date="1996" name="J. Cell. Physiol.">
        <title>Opposite regulation of thrombospondin-1 and corticotropin-induced secreted protein/thrombospondin-2 expression by adrenocorticotropic hormone in adrenocortical cells.</title>
        <authorList>
            <person name="Lafeuillade B."/>
            <person name="Pellerin S."/>
            <person name="Keramidas M."/>
            <person name="Danik M."/>
            <person name="Chambaz E.M."/>
            <person name="Feige J.J."/>
        </authorList>
    </citation>
    <scope>NUCLEOTIDE SEQUENCE [MRNA] OF 1-522</scope>
</reference>
<reference key="3">
    <citation type="submission" date="1995-05" db="EMBL/GenBank/DDBJ databases">
        <title>Cloning and sequencing of bovine thrombospondin stimulatory effect of TGF-beta.</title>
        <authorList>
            <person name="Zafar R.S."/>
            <person name="Moll Y.D."/>
            <person name="Womack J.F."/>
            <person name="Walz D.A."/>
        </authorList>
    </citation>
    <scope>NUCLEOTIDE SEQUENCE [MRNA] OF 318-831</scope>
    <source>
        <tissue>Aortic endothelium</tissue>
    </source>
</reference>
<protein>
    <recommendedName>
        <fullName>Thrombospondin-2</fullName>
    </recommendedName>
    <alternativeName>
        <fullName>Corticotropin-induced secreted protein</fullName>
        <shortName>CISP</shortName>
    </alternativeName>
</protein>
<accession>Q95116</accession>
<accession>Q28180</accession>
<organism>
    <name type="scientific">Bos taurus</name>
    <name type="common">Bovine</name>
    <dbReference type="NCBI Taxonomy" id="9913"/>
    <lineage>
        <taxon>Eukaryota</taxon>
        <taxon>Metazoa</taxon>
        <taxon>Chordata</taxon>
        <taxon>Craniata</taxon>
        <taxon>Vertebrata</taxon>
        <taxon>Euteleostomi</taxon>
        <taxon>Mammalia</taxon>
        <taxon>Eutheria</taxon>
        <taxon>Laurasiatheria</taxon>
        <taxon>Artiodactyla</taxon>
        <taxon>Ruminantia</taxon>
        <taxon>Pecora</taxon>
        <taxon>Bovidae</taxon>
        <taxon>Bovinae</taxon>
        <taxon>Bos</taxon>
    </lineage>
</organism>
<sequence length="1170" mass="129863">MLWPLLLLALWAWPSAQAGDQDEDTAFDLFSISNINRKTIGAKQFRGPDPSVPAYRFVRFDYIPPVSAEHLGRITEAMRRKEGFFLTASMKQDRRSRGTLLALEGPGATHRQFEIVSNGPADTLDLTYWVDGTQHVISLEDVGLADSQWKNVTVQVTGETYSLYVGCDLMDSFALDEPFYEHLQTERSRMYVTKGAARESHFRGLLQNVYLVFENSVEDLLSKKGCQQSQGAETNAISENTETLHLSPMVTMEHVGPSAEKSPEVCEHSCEELGSMIRELSGLHVIVNQLHENLRKVSNDNQFLWELIGGPPKTRNVSACWQDGRFFAENETWVVDSCTKCTCKKFKTVCHQISCPPATCADPWFVEGECCPSCVHDGEEGWSPWAEWTECSATCGSGTQQRGRSCDVTSNTCLGPSIQTRACSLGRCDHRIRQDGGWSHWSPWSSCSVTCGVGNVTRIRLCNSPVPQMGGRSCKGSGRETKACQGPPCPVDGRWSPWSPWSACTVTCAGGIRERTRVCNSPEPQHGGKDCVGGAKEQQMCNRKSCPIDGCLSNPCFPGAECSSFPDGSWSCGSCPGGFLGNGTHCEDLDECAVVTDVCFATSKAHRCVNTNPGYHCLPCPPRYKGNQPFGVGLEAARTEKQVCEPENPCKDKTHSCHRHAECIYLGHFSDPMYKCECQTGYAGDGLICGEDSDLDGWPNKNLVCATNATYHCVKDNCPLLPNSGQEDFDKDGIGDACDDDDDNDGVSDEKDNCQLLFNPRQFDYDKDEVGDRCDNCPYVHNPAQIDTDNNGEGDACSVDIDGDDVFNERDNCPYVYNTDQRDTDGDGVGDHCDNCPLVHNPDQTDVDNDLVGDQCDNNEDIDEDGHQNNQDNCPHIPNANQADHDRDGQGDACDSDDDNDGIPDDRDNCRLVANPDQEDSDGDRRGDACKDDFDNDSIPDIDDVCPENNAISETDFRNFQMVHLDPKGTTQIDPNWVIRHQGKELVQTANSDPGIAVGFDEFGSVDFSGTFYVNTDRDDDYAGFVFGYQSSSRFYVVMWKQVTQTYWEDQPTRAYGYSGVSLKVVNSTTGTGEHLRNALWHTGNTEGQVRTLWHDPKNIGWKDYTAYRWHLTHRPKTGYIRVLVHEGKQVMADSGPIYDQTYAGGRLGLFVFSQEMVYFSDLKYECRDV</sequence>
<comment type="function">
    <text evidence="1">Adhesive glycoprotein that mediates cell-to-cell and cell-to-matrix interactions. Ligand for CD36 mediating antiangiogenic properties (By similarity).</text>
</comment>
<comment type="subunit">
    <text evidence="1">Homotrimer; disulfide-linked. Can bind to fibrinogen, fibronectin, laminin and type V collagen. Interacts (via the TSP type I repeats) with CD36; the interaction conveys an antiangiogenic effect. Interacts (via the TSP type I repeats) with HRG; the interaction blocks the antiangiogenic effect of THBS2 with CD36 (By similarity).</text>
</comment>
<comment type="similarity">
    <text evidence="8">Belongs to the thrombospondin family.</text>
</comment>
<proteinExistence type="evidence at transcript level"/>
<name>TSP2_BOVIN</name>
<feature type="signal peptide" evidence="2">
    <location>
        <begin position="1"/>
        <end position="18"/>
    </location>
</feature>
<feature type="chain" id="PRO_0000035845" description="Thrombospondin-2">
    <location>
        <begin position="19"/>
        <end position="1170"/>
    </location>
</feature>
<feature type="domain" description="Laminin G-like">
    <location>
        <begin position="19"/>
        <end position="215"/>
    </location>
</feature>
<feature type="domain" description="VWFC" evidence="5">
    <location>
        <begin position="318"/>
        <end position="375"/>
    </location>
</feature>
<feature type="domain" description="TSP type-1 1" evidence="4">
    <location>
        <begin position="379"/>
        <end position="429"/>
    </location>
</feature>
<feature type="domain" description="TSP type-1 2" evidence="4">
    <location>
        <begin position="435"/>
        <end position="490"/>
    </location>
</feature>
<feature type="domain" description="TSP type-1 3" evidence="4">
    <location>
        <begin position="492"/>
        <end position="547"/>
    </location>
</feature>
<feature type="domain" description="EGF-like 1" evidence="3">
    <location>
        <begin position="547"/>
        <end position="587"/>
    </location>
</feature>
<feature type="domain" description="EGF-like 2" evidence="3">
    <location>
        <begin position="646"/>
        <end position="690"/>
    </location>
</feature>
<feature type="repeat" description="TSP type-3 1">
    <location>
        <begin position="691"/>
        <end position="726"/>
    </location>
</feature>
<feature type="repeat" description="TSP type-3 2">
    <location>
        <begin position="727"/>
        <end position="762"/>
    </location>
</feature>
<feature type="repeat" description="TSP type-3 3">
    <location>
        <begin position="763"/>
        <end position="785"/>
    </location>
</feature>
<feature type="repeat" description="TSP type-3 4">
    <location>
        <begin position="786"/>
        <end position="821"/>
    </location>
</feature>
<feature type="repeat" description="TSP type-3 5">
    <location>
        <begin position="822"/>
        <end position="844"/>
    </location>
</feature>
<feature type="repeat" description="TSP type-3 6">
    <location>
        <begin position="845"/>
        <end position="882"/>
    </location>
</feature>
<feature type="repeat" description="TSP type-3 7">
    <location>
        <begin position="883"/>
        <end position="918"/>
    </location>
</feature>
<feature type="repeat" description="TSP type-3 8">
    <location>
        <begin position="919"/>
        <end position="954"/>
    </location>
</feature>
<feature type="domain" description="TSP C-terminal" evidence="6">
    <location>
        <begin position="958"/>
        <end position="1170"/>
    </location>
</feature>
<feature type="region of interest" description="Heparin-binding" evidence="2">
    <location>
        <begin position="19"/>
        <end position="232"/>
    </location>
</feature>
<feature type="region of interest" description="Disordered" evidence="7">
    <location>
        <begin position="731"/>
        <end position="750"/>
    </location>
</feature>
<feature type="region of interest" description="Disordered" evidence="7">
    <location>
        <begin position="841"/>
        <end position="944"/>
    </location>
</feature>
<feature type="short sequence motif" description="Cell attachment site" evidence="2">
    <location>
        <begin position="926"/>
        <end position="928"/>
    </location>
</feature>
<feature type="compositionally biased region" description="Acidic residues" evidence="7">
    <location>
        <begin position="737"/>
        <end position="747"/>
    </location>
</feature>
<feature type="compositionally biased region" description="Acidic residues" evidence="7">
    <location>
        <begin position="845"/>
        <end position="864"/>
    </location>
</feature>
<feature type="compositionally biased region" description="Acidic residues" evidence="7">
    <location>
        <begin position="894"/>
        <end position="903"/>
    </location>
</feature>
<feature type="compositionally biased region" description="Basic and acidic residues" evidence="7">
    <location>
        <begin position="923"/>
        <end position="933"/>
    </location>
</feature>
<feature type="compositionally biased region" description="Acidic residues" evidence="7">
    <location>
        <begin position="934"/>
        <end position="944"/>
    </location>
</feature>
<feature type="glycosylation site" description="N-linked (GlcNAc...) asparagine" evidence="2">
    <location>
        <position position="151"/>
    </location>
</feature>
<feature type="glycosylation site" description="N-linked (GlcNAc...) asparagine" evidence="2">
    <location>
        <position position="316"/>
    </location>
</feature>
<feature type="glycosylation site" description="N-linked (GlcNAc...) asparagine" evidence="2">
    <location>
        <position position="330"/>
    </location>
</feature>
<feature type="glycosylation site" description="N-linked (GlcNAc...) asparagine" evidence="2">
    <location>
        <position position="455"/>
    </location>
</feature>
<feature type="glycosylation site" description="N-linked (GlcNAc...) asparagine" evidence="2">
    <location>
        <position position="582"/>
    </location>
</feature>
<feature type="glycosylation site" description="N-linked (GlcNAc...) asparagine" evidence="2">
    <location>
        <position position="708"/>
    </location>
</feature>
<feature type="glycosylation site" description="N-linked (GlcNAc...) asparagine" evidence="2">
    <location>
        <position position="936"/>
    </location>
</feature>
<feature type="glycosylation site" description="N-linked (GlcNAc...) asparagine" evidence="2">
    <location>
        <position position="1067"/>
    </location>
</feature>
<feature type="disulfide bond" description="Interchain" evidence="8">
    <location>
        <position position="266"/>
    </location>
</feature>
<feature type="disulfide bond" description="Interchain" evidence="8">
    <location>
        <position position="270"/>
    </location>
</feature>
<feature type="disulfide bond" evidence="1">
    <location>
        <begin position="391"/>
        <end position="423"/>
    </location>
</feature>
<feature type="disulfide bond" evidence="1">
    <location>
        <begin position="395"/>
        <end position="428"/>
    </location>
</feature>
<feature type="disulfide bond" evidence="1">
    <location>
        <begin position="406"/>
        <end position="413"/>
    </location>
</feature>
<feature type="disulfide bond" evidence="1">
    <location>
        <begin position="447"/>
        <end position="484"/>
    </location>
</feature>
<feature type="disulfide bond" evidence="1">
    <location>
        <begin position="451"/>
        <end position="489"/>
    </location>
</feature>
<feature type="disulfide bond" evidence="1">
    <location>
        <begin position="462"/>
        <end position="474"/>
    </location>
</feature>
<feature type="disulfide bond" evidence="1">
    <location>
        <begin position="504"/>
        <end position="541"/>
    </location>
</feature>
<feature type="disulfide bond" evidence="1">
    <location>
        <begin position="508"/>
        <end position="546"/>
    </location>
</feature>
<feature type="disulfide bond" evidence="1">
    <location>
        <begin position="519"/>
        <end position="531"/>
    </location>
</feature>
<feature type="disulfide bond" evidence="1">
    <location>
        <begin position="551"/>
        <end position="562"/>
    </location>
</feature>
<feature type="disulfide bond" evidence="1">
    <location>
        <begin position="556"/>
        <end position="572"/>
    </location>
</feature>
<feature type="disulfide bond" evidence="1">
    <location>
        <begin position="575"/>
        <end position="586"/>
    </location>
</feature>
<feature type="disulfide bond" evidence="1">
    <location>
        <begin position="592"/>
        <end position="608"/>
    </location>
</feature>
<feature type="disulfide bond" evidence="1">
    <location>
        <begin position="599"/>
        <end position="617"/>
    </location>
</feature>
<feature type="disulfide bond" evidence="1">
    <location>
        <begin position="620"/>
        <end position="644"/>
    </location>
</feature>
<feature type="disulfide bond" evidence="1">
    <location>
        <begin position="650"/>
        <end position="663"/>
    </location>
</feature>
<feature type="disulfide bond" evidence="1">
    <location>
        <begin position="657"/>
        <end position="676"/>
    </location>
</feature>
<feature type="disulfide bond" evidence="1">
    <location>
        <begin position="678"/>
        <end position="689"/>
    </location>
</feature>
<feature type="disulfide bond" evidence="1">
    <location>
        <begin position="705"/>
        <end position="713"/>
    </location>
</feature>
<feature type="disulfide bond" evidence="1">
    <location>
        <begin position="718"/>
        <end position="738"/>
    </location>
</feature>
<feature type="disulfide bond" evidence="1">
    <location>
        <begin position="754"/>
        <end position="774"/>
    </location>
</feature>
<feature type="disulfide bond" evidence="1">
    <location>
        <begin position="777"/>
        <end position="797"/>
    </location>
</feature>
<feature type="disulfide bond" evidence="1">
    <location>
        <begin position="813"/>
        <end position="833"/>
    </location>
</feature>
<feature type="disulfide bond" evidence="1">
    <location>
        <begin position="836"/>
        <end position="856"/>
    </location>
</feature>
<feature type="disulfide bond" evidence="1">
    <location>
        <begin position="874"/>
        <end position="894"/>
    </location>
</feature>
<feature type="disulfide bond" evidence="1">
    <location>
        <begin position="910"/>
        <end position="930"/>
    </location>
</feature>
<feature type="disulfide bond" evidence="1">
    <location>
        <begin position="946"/>
        <end position="1167"/>
    </location>
</feature>
<feature type="sequence conflict" description="In Ref. 3; CAA60952." evidence="8" ref="3">
    <original>A</original>
    <variation>V</variation>
    <location>
        <position position="535"/>
    </location>
</feature>
<feature type="sequence conflict" description="In Ref. 3; CAA60952." evidence="8" ref="3">
    <original>S</original>
    <variation>T</variation>
    <location>
        <position position="748"/>
    </location>
</feature>
<evidence type="ECO:0000250" key="1"/>
<evidence type="ECO:0000255" key="2"/>
<evidence type="ECO:0000255" key="3">
    <source>
        <dbReference type="PROSITE-ProRule" id="PRU00076"/>
    </source>
</evidence>
<evidence type="ECO:0000255" key="4">
    <source>
        <dbReference type="PROSITE-ProRule" id="PRU00210"/>
    </source>
</evidence>
<evidence type="ECO:0000255" key="5">
    <source>
        <dbReference type="PROSITE-ProRule" id="PRU00220"/>
    </source>
</evidence>
<evidence type="ECO:0000255" key="6">
    <source>
        <dbReference type="PROSITE-ProRule" id="PRU00635"/>
    </source>
</evidence>
<evidence type="ECO:0000256" key="7">
    <source>
        <dbReference type="SAM" id="MobiDB-lite"/>
    </source>
</evidence>
<evidence type="ECO:0000305" key="8"/>
<gene>
    <name type="primary">THBS2</name>
    <name type="synonym">TSP-2</name>
    <name type="synonym">TSP2</name>
</gene>